<keyword id="KW-0240">DNA-directed RNA polymerase</keyword>
<keyword id="KW-0548">Nucleotidyltransferase</keyword>
<keyword id="KW-0804">Transcription</keyword>
<keyword id="KW-0808">Transferase</keyword>
<evidence type="ECO:0000255" key="1">
    <source>
        <dbReference type="HAMAP-Rule" id="MF_00366"/>
    </source>
</evidence>
<reference key="1">
    <citation type="journal article" date="2008" name="Genome Res.">
        <title>Genome sequence of the beta-rhizobium Cupriavidus taiwanensis and comparative genomics of rhizobia.</title>
        <authorList>
            <person name="Amadou C."/>
            <person name="Pascal G."/>
            <person name="Mangenot S."/>
            <person name="Glew M."/>
            <person name="Bontemps C."/>
            <person name="Capela D."/>
            <person name="Carrere S."/>
            <person name="Cruveiller S."/>
            <person name="Dossat C."/>
            <person name="Lajus A."/>
            <person name="Marchetti M."/>
            <person name="Poinsot V."/>
            <person name="Rouy Z."/>
            <person name="Servin B."/>
            <person name="Saad M."/>
            <person name="Schenowitz C."/>
            <person name="Barbe V."/>
            <person name="Batut J."/>
            <person name="Medigue C."/>
            <person name="Masson-Boivin C."/>
        </authorList>
    </citation>
    <scope>NUCLEOTIDE SEQUENCE [LARGE SCALE GENOMIC DNA]</scope>
    <source>
        <strain>DSM 17343 / BCRC 17206 / CCUG 44338 / CIP 107171 / LMG 19424 / R1</strain>
    </source>
</reference>
<comment type="function">
    <text evidence="1">Promotes RNA polymerase assembly. Latches the N- and C-terminal regions of the beta' subunit thereby facilitating its interaction with the beta and alpha subunits.</text>
</comment>
<comment type="catalytic activity">
    <reaction evidence="1">
        <text>RNA(n) + a ribonucleoside 5'-triphosphate = RNA(n+1) + diphosphate</text>
        <dbReference type="Rhea" id="RHEA:21248"/>
        <dbReference type="Rhea" id="RHEA-COMP:14527"/>
        <dbReference type="Rhea" id="RHEA-COMP:17342"/>
        <dbReference type="ChEBI" id="CHEBI:33019"/>
        <dbReference type="ChEBI" id="CHEBI:61557"/>
        <dbReference type="ChEBI" id="CHEBI:140395"/>
        <dbReference type="EC" id="2.7.7.6"/>
    </reaction>
</comment>
<comment type="subunit">
    <text evidence="1">The RNAP catalytic core consists of 2 alpha, 1 beta, 1 beta' and 1 omega subunit. When a sigma factor is associated with the core the holoenzyme is formed, which can initiate transcription.</text>
</comment>
<comment type="similarity">
    <text evidence="1">Belongs to the RNA polymerase subunit omega family.</text>
</comment>
<dbReference type="EC" id="2.7.7.6" evidence="1"/>
<dbReference type="EMBL" id="CU633749">
    <property type="protein sequence ID" value="CAQ68918.1"/>
    <property type="molecule type" value="Genomic_DNA"/>
</dbReference>
<dbReference type="RefSeq" id="WP_006578656.1">
    <property type="nucleotide sequence ID" value="NC_010528.1"/>
</dbReference>
<dbReference type="SMR" id="B3R3N5"/>
<dbReference type="GeneID" id="98342150"/>
<dbReference type="KEGG" id="cti:RALTA_A0951"/>
<dbReference type="eggNOG" id="COG1758">
    <property type="taxonomic scope" value="Bacteria"/>
</dbReference>
<dbReference type="HOGENOM" id="CLU_125406_5_1_4"/>
<dbReference type="BioCyc" id="CTAI977880:RALTA_RS04500-MONOMER"/>
<dbReference type="Proteomes" id="UP000001692">
    <property type="component" value="Chromosome 1"/>
</dbReference>
<dbReference type="GO" id="GO:0000428">
    <property type="term" value="C:DNA-directed RNA polymerase complex"/>
    <property type="evidence" value="ECO:0007669"/>
    <property type="project" value="UniProtKB-KW"/>
</dbReference>
<dbReference type="GO" id="GO:0003677">
    <property type="term" value="F:DNA binding"/>
    <property type="evidence" value="ECO:0007669"/>
    <property type="project" value="UniProtKB-UniRule"/>
</dbReference>
<dbReference type="GO" id="GO:0003899">
    <property type="term" value="F:DNA-directed RNA polymerase activity"/>
    <property type="evidence" value="ECO:0007669"/>
    <property type="project" value="UniProtKB-UniRule"/>
</dbReference>
<dbReference type="GO" id="GO:0006351">
    <property type="term" value="P:DNA-templated transcription"/>
    <property type="evidence" value="ECO:0007669"/>
    <property type="project" value="UniProtKB-UniRule"/>
</dbReference>
<dbReference type="Gene3D" id="3.90.940.10">
    <property type="match status" value="1"/>
</dbReference>
<dbReference type="HAMAP" id="MF_00366">
    <property type="entry name" value="RNApol_bact_RpoZ"/>
    <property type="match status" value="1"/>
</dbReference>
<dbReference type="InterPro" id="IPR003716">
    <property type="entry name" value="DNA-dir_RNA_pol_omega"/>
</dbReference>
<dbReference type="InterPro" id="IPR006110">
    <property type="entry name" value="Pol_omega/Rpo6/RPB6"/>
</dbReference>
<dbReference type="InterPro" id="IPR036161">
    <property type="entry name" value="RPB6/omega-like_sf"/>
</dbReference>
<dbReference type="NCBIfam" id="TIGR00690">
    <property type="entry name" value="rpoZ"/>
    <property type="match status" value="1"/>
</dbReference>
<dbReference type="PANTHER" id="PTHR34476">
    <property type="entry name" value="DNA-DIRECTED RNA POLYMERASE SUBUNIT OMEGA"/>
    <property type="match status" value="1"/>
</dbReference>
<dbReference type="PANTHER" id="PTHR34476:SF1">
    <property type="entry name" value="DNA-DIRECTED RNA POLYMERASE SUBUNIT OMEGA"/>
    <property type="match status" value="1"/>
</dbReference>
<dbReference type="Pfam" id="PF01192">
    <property type="entry name" value="RNA_pol_Rpb6"/>
    <property type="match status" value="1"/>
</dbReference>
<dbReference type="SMART" id="SM01409">
    <property type="entry name" value="RNA_pol_Rpb6"/>
    <property type="match status" value="1"/>
</dbReference>
<dbReference type="SUPFAM" id="SSF63562">
    <property type="entry name" value="RPB6/omega subunit-like"/>
    <property type="match status" value="1"/>
</dbReference>
<proteinExistence type="inferred from homology"/>
<protein>
    <recommendedName>
        <fullName evidence="1">DNA-directed RNA polymerase subunit omega</fullName>
        <shortName evidence="1">RNAP omega subunit</shortName>
        <ecNumber evidence="1">2.7.7.6</ecNumber>
    </recommendedName>
    <alternativeName>
        <fullName evidence="1">RNA polymerase omega subunit</fullName>
    </alternativeName>
    <alternativeName>
        <fullName evidence="1">Transcriptase subunit omega</fullName>
    </alternativeName>
</protein>
<accession>B3R3N5</accession>
<feature type="chain" id="PRO_1000121208" description="DNA-directed RNA polymerase subunit omega">
    <location>
        <begin position="1"/>
        <end position="67"/>
    </location>
</feature>
<gene>
    <name evidence="1" type="primary">rpoZ</name>
    <name type="ordered locus">RALTA_A0951</name>
</gene>
<sequence length="67" mass="7439">MARITVEDCLKHIPNRFELALAATYRARQLVQGHTPKVEAKDKPTVVALREIASGQVGIEMLKKVPT</sequence>
<name>RPOZ_CUPTR</name>
<organism>
    <name type="scientific">Cupriavidus taiwanensis (strain DSM 17343 / BCRC 17206 / CCUG 44338 / CIP 107171 / LMG 19424 / R1)</name>
    <name type="common">Ralstonia taiwanensis (strain LMG 19424)</name>
    <dbReference type="NCBI Taxonomy" id="977880"/>
    <lineage>
        <taxon>Bacteria</taxon>
        <taxon>Pseudomonadati</taxon>
        <taxon>Pseudomonadota</taxon>
        <taxon>Betaproteobacteria</taxon>
        <taxon>Burkholderiales</taxon>
        <taxon>Burkholderiaceae</taxon>
        <taxon>Cupriavidus</taxon>
    </lineage>
</organism>